<reference evidence="14" key="1">
    <citation type="journal article" date="2002" name="Nature">
        <title>Genome sequence of the human malaria parasite Plasmodium falciparum.</title>
        <authorList>
            <person name="Gardner M.J."/>
            <person name="Hall N."/>
            <person name="Fung E."/>
            <person name="White O."/>
            <person name="Berriman M."/>
            <person name="Hyman R.W."/>
            <person name="Carlton J.M."/>
            <person name="Pain A."/>
            <person name="Nelson K.E."/>
            <person name="Bowman S."/>
            <person name="Paulsen I.T."/>
            <person name="James K.D."/>
            <person name="Eisen J.A."/>
            <person name="Rutherford K.M."/>
            <person name="Salzberg S.L."/>
            <person name="Craig A."/>
            <person name="Kyes S."/>
            <person name="Chan M.-S."/>
            <person name="Nene V."/>
            <person name="Shallom S.J."/>
            <person name="Suh B."/>
            <person name="Peterson J."/>
            <person name="Angiuoli S."/>
            <person name="Pertea M."/>
            <person name="Allen J."/>
            <person name="Selengut J."/>
            <person name="Haft D."/>
            <person name="Mather M.W."/>
            <person name="Vaidya A.B."/>
            <person name="Martin D.M.A."/>
            <person name="Fairlamb A.H."/>
            <person name="Fraunholz M.J."/>
            <person name="Roos D.S."/>
            <person name="Ralph S.A."/>
            <person name="McFadden G.I."/>
            <person name="Cummings L.M."/>
            <person name="Subramanian G.M."/>
            <person name="Mungall C."/>
            <person name="Venter J.C."/>
            <person name="Carucci D.J."/>
            <person name="Hoffman S.L."/>
            <person name="Newbold C."/>
            <person name="Davis R.W."/>
            <person name="Fraser C.M."/>
            <person name="Barrell B.G."/>
        </authorList>
    </citation>
    <scope>NUCLEOTIDE SEQUENCE [LARGE SCALE GENOMIC DNA]</scope>
    <source>
        <strain evidence="14">3D7</strain>
    </source>
</reference>
<reference evidence="12" key="2">
    <citation type="journal article" date="2016" name="Nat. Commun.">
        <title>A vacuolar iron-transporter homologue acts as a detoxifier in Plasmodium.</title>
        <authorList>
            <person name="Slavic K."/>
            <person name="Krishna S."/>
            <person name="Lahree A."/>
            <person name="Bouyer G."/>
            <person name="Hanson K.K."/>
            <person name="Vera I."/>
            <person name="Pittman J.K."/>
            <person name="Staines H.M."/>
            <person name="Mota M.M."/>
        </authorList>
    </citation>
    <scope>FUNCTION</scope>
    <scope>TRANSPORTER ACTIVITY</scope>
    <scope>SUBCELLULAR LOCATION</scope>
</reference>
<reference evidence="12" key="3">
    <citation type="journal article" date="2017" name="Sci. Rep.">
        <title>Recombinant vacuolar iron transporter family homologue PfVIT from human malaria-causing Plasmodium falciparum is a Fe2+/H+exchanger.</title>
        <authorList>
            <person name="Labarbuta P."/>
            <person name="Duckett K."/>
            <person name="Botting C.H."/>
            <person name="Chahrour O."/>
            <person name="Malone J."/>
            <person name="Dalton J.P."/>
            <person name="Law C.J."/>
        </authorList>
    </citation>
    <scope>FUNCTION</scope>
    <scope>SUBUNIT</scope>
</reference>
<reference evidence="12" key="4">
    <citation type="journal article" date="2021" name="Malar. J.">
        <title>Characterization of the substrate binding site of an iron detoxifying membrane transporter from Plasmodium falciparum.</title>
        <authorList>
            <person name="Sharma P."/>
            <person name="Toth V."/>
            <person name="Hyland E.M."/>
            <person name="Law C.J."/>
        </authorList>
    </citation>
    <scope>FUNCTION</scope>
    <scope>SUBCELLULAR LOCATION</scope>
    <scope>MUTAGENESIS OF GLU-113; GLU-116; GLU-124; GLU-127; MET-161; MET-162 AND GLU-165</scope>
</reference>
<reference key="5">
    <citation type="journal article" date="2024" name="Front. Cell. Infect. Microbiol.">
        <title>Iron transport pathways in the human malaria parasite Plasmodium falciparum revealed by RNA-sequencing.</title>
        <authorList>
            <person name="Wunderlich J."/>
            <person name="Kotov V."/>
            <person name="Votborg-Novel L."/>
            <person name="Ntalla C."/>
            <person name="Geffken M."/>
            <person name="Peine S."/>
            <person name="Portugal S."/>
            <person name="Strauss J."/>
        </authorList>
    </citation>
    <scope>SUBCELLULAR LOCATION</scope>
    <scope>DEVELOPMENTAL STAGE</scope>
    <scope>INDUCTION</scope>
    <scope>DISRUPTION PHENOTYPE</scope>
</reference>
<dbReference type="EMBL" id="LN999947">
    <property type="protein sequence ID" value="CZT99396.1"/>
    <property type="molecule type" value="Genomic_DNA"/>
</dbReference>
<dbReference type="RefSeq" id="XP_001350634.1">
    <property type="nucleotide sequence ID" value="XM_001350598.1"/>
</dbReference>
<dbReference type="SMR" id="Q8I5I0"/>
<dbReference type="STRING" id="36329.Q8I5I0"/>
<dbReference type="TCDB" id="2.A.89.1.13">
    <property type="family name" value="the vacuolar iron transporter (vit) family"/>
</dbReference>
<dbReference type="PaxDb" id="5833-PFL1140w"/>
<dbReference type="EnsemblProtists" id="CZT99396">
    <property type="protein sequence ID" value="CZT99396"/>
    <property type="gene ID" value="PF3D7_1223700"/>
</dbReference>
<dbReference type="GeneID" id="811280"/>
<dbReference type="KEGG" id="pfa:PF3D7_1223700"/>
<dbReference type="VEuPathDB" id="PlasmoDB:PF3D7_1223700"/>
<dbReference type="HOGENOM" id="CLU_038957_2_0_1"/>
<dbReference type="InParanoid" id="Q8I5I0"/>
<dbReference type="OMA" id="SRIGWLR"/>
<dbReference type="OrthoDB" id="73465at2759"/>
<dbReference type="PhylomeDB" id="Q8I5I0"/>
<dbReference type="Proteomes" id="UP000001450">
    <property type="component" value="Chromosome 12"/>
</dbReference>
<dbReference type="GO" id="GO:0005789">
    <property type="term" value="C:endoplasmic reticulum membrane"/>
    <property type="evidence" value="ECO:0007669"/>
    <property type="project" value="UniProtKB-SubCell"/>
</dbReference>
<dbReference type="GO" id="GO:0016020">
    <property type="term" value="C:membrane"/>
    <property type="evidence" value="ECO:0000318"/>
    <property type="project" value="GO_Central"/>
</dbReference>
<dbReference type="GO" id="GO:0005774">
    <property type="term" value="C:vacuolar membrane"/>
    <property type="evidence" value="ECO:0007669"/>
    <property type="project" value="UniProtKB-SubCell"/>
</dbReference>
<dbReference type="GO" id="GO:0005381">
    <property type="term" value="F:iron ion transmembrane transporter activity"/>
    <property type="evidence" value="ECO:0000318"/>
    <property type="project" value="GO_Central"/>
</dbReference>
<dbReference type="GO" id="GO:0005384">
    <property type="term" value="F:manganese ion transmembrane transporter activity"/>
    <property type="evidence" value="ECO:0000318"/>
    <property type="project" value="GO_Central"/>
</dbReference>
<dbReference type="GO" id="GO:0046872">
    <property type="term" value="F:metal ion binding"/>
    <property type="evidence" value="ECO:0007669"/>
    <property type="project" value="UniProtKB-KW"/>
</dbReference>
<dbReference type="GO" id="GO:0030026">
    <property type="term" value="P:intracellular manganese ion homeostasis"/>
    <property type="evidence" value="ECO:0000318"/>
    <property type="project" value="GO_Central"/>
</dbReference>
<dbReference type="CDD" id="cd02434">
    <property type="entry name" value="Nodulin-21_like_3"/>
    <property type="match status" value="1"/>
</dbReference>
<dbReference type="InterPro" id="IPR008217">
    <property type="entry name" value="Ccc1_fam"/>
</dbReference>
<dbReference type="PANTHER" id="PTHR31851">
    <property type="entry name" value="FE(2+)/MN(2+) TRANSPORTER PCL1"/>
    <property type="match status" value="1"/>
</dbReference>
<dbReference type="Pfam" id="PF01988">
    <property type="entry name" value="VIT1"/>
    <property type="match status" value="1"/>
</dbReference>
<name>VIT_PLAF7</name>
<sequence length="273" mass="30984">MVSKKTIEARKAYYNEDVVLSKEAHDFYHNLDKHGENHNLDKDNLKTIIFGSLDGIITIFAIVSGCVGAKITPTQVIIIGIGNLFANAISMGFSEYTSSTAQRDFMLAEKKREEWEIENCPSEEKQEMIDIYMNKYKFDSEDARNLVEITFRNKNFFLEHMMSEELGLIVTNEDKNECLKKGIIMFLSFAVFGIIPLSAYVAYTVFFGYTDYTTSFLVVFISTLTTLFILGLFKSQFTNQKPITCALYMVLNGMIAGMVPFLLGVVLKNNISE</sequence>
<keyword id="KW-0968">Cytoplasmic vesicle</keyword>
<keyword id="KW-0256">Endoplasmic reticulum</keyword>
<keyword id="KW-0406">Ion transport</keyword>
<keyword id="KW-0408">Iron</keyword>
<keyword id="KW-0410">Iron transport</keyword>
<keyword id="KW-0472">Membrane</keyword>
<keyword id="KW-0479">Metal-binding</keyword>
<keyword id="KW-0597">Phosphoprotein</keyword>
<keyword id="KW-1185">Reference proteome</keyword>
<keyword id="KW-0812">Transmembrane</keyword>
<keyword id="KW-1133">Transmembrane helix</keyword>
<keyword id="KW-0813">Transport</keyword>
<keyword id="KW-0926">Vacuole</keyword>
<gene>
    <name evidence="12" type="primary">VIT</name>
    <name evidence="13" type="ORF">PF3D7_1223700</name>
</gene>
<comment type="function">
    <text evidence="4 5 6">Vacuolar iron transporter involved in the transfer of iron ions from the cytosol to the vacuole for intracellular iron storage (PubMed:26786069, PubMed:34193175). Involved in detoxification of excess iron (PubMed:26786069, PubMed:28198449, PubMed:34193175). The transport mechanism is not well defined and the role of protons is not clear (PubMed:26786069, PubMed:28198449).</text>
</comment>
<comment type="catalytic activity">
    <reaction evidence="4">
        <text>Fe(2+)(in) = Fe(2+)(out)</text>
        <dbReference type="Rhea" id="RHEA:28486"/>
        <dbReference type="ChEBI" id="CHEBI:29033"/>
    </reaction>
    <physiologicalReaction direction="left-to-right" evidence="12">
        <dbReference type="Rhea" id="RHEA:28487"/>
    </physiologicalReaction>
</comment>
<comment type="subunit">
    <text evidence="5">Monomer.</text>
</comment>
<comment type="subcellular location">
    <subcellularLocation>
        <location evidence="4 6">Vacuole membrane</location>
        <topology evidence="3">Multi-pass membrane protein</topology>
    </subcellularLocation>
    <subcellularLocation>
        <location evidence="1">Endoplasmic reticulum membrane</location>
        <topology evidence="3">Multi-pass membrane protein</topology>
    </subcellularLocation>
    <subcellularLocation>
        <location evidence="7">Cytoplasmic vesicle membrane</location>
        <topology evidence="3">Multi-pass membrane protein</topology>
    </subcellularLocation>
</comment>
<comment type="developmental stage">
    <text evidence="7">Expressed in blood stages (at protein level).</text>
</comment>
<comment type="induction">
    <text evidence="7">Expression is modulated by the levels of iron ions in the environment.</text>
</comment>
<comment type="disruption phenotype">
    <text evidence="7">Targeted gene disruption has no significant effect on blood stage parasite growth under standard conditions (PubMed:39575308). Reduced growth rates in the presence of hepcidin, a specific ferroportin inhibitor causing an increase in labile iron levels in erythrocytes (PubMed:39575308).</text>
</comment>
<comment type="miscellaneous">
    <text evidence="4 5">Iron transport is insensitive to the proton pump inhibitor bafilomycin A1 or to the proton ionophore CCCP in a yeast heterologous expression system (PubMed:26786069). Functions as a proton-driven antiport in a bacterial heterologous expression system (PubMed:28198449).</text>
</comment>
<comment type="similarity">
    <text evidence="12">Belongs to the CCC1 family.</text>
</comment>
<protein>
    <recommendedName>
        <fullName evidence="8 9 11">Vacuolar iron transporter</fullName>
        <shortName evidence="8 9 10 11">PfVIT</shortName>
    </recommendedName>
</protein>
<organism evidence="14">
    <name type="scientific">Plasmodium falciparum (isolate 3D7)</name>
    <dbReference type="NCBI Taxonomy" id="36329"/>
    <lineage>
        <taxon>Eukaryota</taxon>
        <taxon>Sar</taxon>
        <taxon>Alveolata</taxon>
        <taxon>Apicomplexa</taxon>
        <taxon>Aconoidasida</taxon>
        <taxon>Haemosporida</taxon>
        <taxon>Plasmodiidae</taxon>
        <taxon>Plasmodium</taxon>
        <taxon>Plasmodium (Laverania)</taxon>
    </lineage>
</organism>
<feature type="chain" id="PRO_0000459389" description="Vacuolar iron transporter">
    <location>
        <begin position="1"/>
        <end position="273"/>
    </location>
</feature>
<feature type="topological domain" description="Cytoplasmic" evidence="12">
    <location>
        <begin position="1"/>
        <end position="47"/>
    </location>
</feature>
<feature type="transmembrane region" description="Helical" evidence="3">
    <location>
        <begin position="48"/>
        <end position="68"/>
    </location>
</feature>
<feature type="topological domain" description="Vacuolar" evidence="12">
    <location>
        <begin position="69"/>
        <end position="75"/>
    </location>
</feature>
<feature type="transmembrane region" description="Helical" evidence="3">
    <location>
        <begin position="76"/>
        <end position="96"/>
    </location>
</feature>
<feature type="topological domain" description="Cytoplasmic" evidence="12">
    <location>
        <begin position="97"/>
        <end position="181"/>
    </location>
</feature>
<feature type="transmembrane region" description="Helical" evidence="3">
    <location>
        <begin position="182"/>
        <end position="202"/>
    </location>
</feature>
<feature type="topological domain" description="Vacuolar" evidence="12">
    <location>
        <begin position="203"/>
        <end position="212"/>
    </location>
</feature>
<feature type="transmembrane region" description="Helical" evidence="3">
    <location>
        <begin position="213"/>
        <end position="233"/>
    </location>
</feature>
<feature type="topological domain" description="Cytoplasmic" evidence="12">
    <location>
        <begin position="234"/>
        <end position="246"/>
    </location>
</feature>
<feature type="transmembrane region" description="Helical" evidence="3">
    <location>
        <begin position="247"/>
        <end position="267"/>
    </location>
</feature>
<feature type="topological domain" description="Vacuolar" evidence="12">
    <location>
        <begin position="268"/>
        <end position="273"/>
    </location>
</feature>
<feature type="binding site" evidence="2">
    <location>
        <position position="113"/>
    </location>
    <ligand>
        <name>Fe cation</name>
        <dbReference type="ChEBI" id="CHEBI:24875"/>
        <label>1</label>
    </ligand>
</feature>
<feature type="binding site" evidence="2">
    <location>
        <position position="113"/>
    </location>
    <ligand>
        <name>Fe cation</name>
        <dbReference type="ChEBI" id="CHEBI:24875"/>
        <label>2</label>
    </ligand>
</feature>
<feature type="binding site" evidence="2">
    <location>
        <position position="116"/>
    </location>
    <ligand>
        <name>Fe cation</name>
        <dbReference type="ChEBI" id="CHEBI:24875"/>
        <label>1</label>
    </ligand>
</feature>
<feature type="binding site" evidence="2">
    <location>
        <position position="116"/>
    </location>
    <ligand>
        <name>Fe cation</name>
        <dbReference type="ChEBI" id="CHEBI:24875"/>
        <label>3</label>
    </ligand>
</feature>
<feature type="binding site" evidence="2">
    <location>
        <position position="124"/>
    </location>
    <ligand>
        <name>Fe cation</name>
        <dbReference type="ChEBI" id="CHEBI:24875"/>
        <label>1</label>
    </ligand>
</feature>
<feature type="binding site" evidence="2">
    <location>
        <position position="124"/>
    </location>
    <ligand>
        <name>Fe cation</name>
        <dbReference type="ChEBI" id="CHEBI:24875"/>
        <label>2</label>
    </ligand>
</feature>
<feature type="binding site" evidence="2">
    <location>
        <position position="124"/>
    </location>
    <ligand>
        <name>Fe cation</name>
        <dbReference type="ChEBI" id="CHEBI:24875"/>
        <label>3</label>
    </ligand>
</feature>
<feature type="binding site" evidence="2">
    <location>
        <position position="127"/>
    </location>
    <ligand>
        <name>Fe cation</name>
        <dbReference type="ChEBI" id="CHEBI:24875"/>
        <label>1</label>
    </ligand>
</feature>
<feature type="binding site" evidence="2">
    <location>
        <position position="127"/>
    </location>
    <ligand>
        <name>Fe cation</name>
        <dbReference type="ChEBI" id="CHEBI:24875"/>
        <label>2</label>
    </ligand>
</feature>
<feature type="binding site" evidence="2">
    <location>
        <position position="127"/>
    </location>
    <ligand>
        <name>Fe cation</name>
        <dbReference type="ChEBI" id="CHEBI:24875"/>
        <label>3</label>
    </ligand>
</feature>
<feature type="binding site" evidence="2">
    <location>
        <position position="161"/>
    </location>
    <ligand>
        <name>Fe cation</name>
        <dbReference type="ChEBI" id="CHEBI:24875"/>
        <label>2</label>
    </ligand>
</feature>
<feature type="binding site" evidence="2">
    <location>
        <position position="165"/>
    </location>
    <ligand>
        <name>Fe cation</name>
        <dbReference type="ChEBI" id="CHEBI:24875"/>
        <label>1</label>
    </ligand>
</feature>
<feature type="mutagenesis site" description="No effect on iron tolerance in a yeast heterologous expression system." evidence="6">
    <original>E</original>
    <variation>A</variation>
    <location>
        <position position="113"/>
    </location>
</feature>
<feature type="mutagenesis site" description="Reduces iron tolerance in a yeast heterologous expression system." evidence="6">
    <original>E</original>
    <variation>Q</variation>
    <location>
        <position position="113"/>
    </location>
</feature>
<feature type="mutagenesis site" description="No effect on iron tolerance in a yeast heterologous expression system." evidence="6">
    <original>E</original>
    <variation>A</variation>
    <location>
        <position position="116"/>
    </location>
</feature>
<feature type="mutagenesis site" description="Reduces iron tolerance in a yeast heterologous expression system." evidence="6">
    <original>E</original>
    <variation>Q</variation>
    <location>
        <position position="116"/>
    </location>
</feature>
<feature type="mutagenesis site" description="No effect on iron tolerance in a yeast heterologous expression system." evidence="6">
    <original>E</original>
    <variation>A</variation>
    <variation>Q</variation>
    <location>
        <position position="124"/>
    </location>
</feature>
<feature type="mutagenesis site" description="Slightly increases iron tolerance in a yeast heterologous expression system." evidence="6">
    <original>E</original>
    <variation>A</variation>
    <location>
        <position position="127"/>
    </location>
</feature>
<feature type="mutagenesis site" description="Reduces iron tolerance in a yeast heterologous expression system." evidence="6">
    <original>E</original>
    <variation>Q</variation>
    <location>
        <position position="127"/>
    </location>
</feature>
<feature type="mutagenesis site" description="Reduces iron tolerance in a yeast heterologous expression system." evidence="6">
    <original>M</original>
    <variation>A</variation>
    <variation>L</variation>
    <variation>C</variation>
    <variation>E</variation>
    <location>
        <position position="161"/>
    </location>
</feature>
<feature type="mutagenesis site" description="No effect on iron tolerance in a yeast heterologous expression system." evidence="6">
    <original>M</original>
    <variation>A</variation>
    <location>
        <position position="162"/>
    </location>
</feature>
<feature type="mutagenesis site" description="Reduces iron tolerance in a yeast heterologous expression system." evidence="6">
    <original>E</original>
    <variation>A</variation>
    <location>
        <position position="165"/>
    </location>
</feature>
<feature type="mutagenesis site" description="No effect on iron tolerance in a yeast heterologous expression system." evidence="6">
    <original>E</original>
    <variation>Q</variation>
    <location>
        <position position="165"/>
    </location>
</feature>
<accession>Q8I5I0</accession>
<proteinExistence type="evidence at protein level"/>
<evidence type="ECO:0000250" key="1">
    <source>
        <dbReference type="UniProtKB" id="A0A509AT60"/>
    </source>
</evidence>
<evidence type="ECO:0000250" key="2">
    <source>
        <dbReference type="UniProtKB" id="P0DO17"/>
    </source>
</evidence>
<evidence type="ECO:0000255" key="3"/>
<evidence type="ECO:0000269" key="4">
    <source>
    </source>
</evidence>
<evidence type="ECO:0000269" key="5">
    <source>
    </source>
</evidence>
<evidence type="ECO:0000269" key="6">
    <source>
    </source>
</evidence>
<evidence type="ECO:0000269" key="7">
    <source>
    </source>
</evidence>
<evidence type="ECO:0000303" key="8">
    <source>
    </source>
</evidence>
<evidence type="ECO:0000303" key="9">
    <source>
    </source>
</evidence>
<evidence type="ECO:0000303" key="10">
    <source>
    </source>
</evidence>
<evidence type="ECO:0000303" key="11">
    <source>
    </source>
</evidence>
<evidence type="ECO:0000305" key="12"/>
<evidence type="ECO:0000312" key="13">
    <source>
        <dbReference type="EMBL" id="CZT99396.1"/>
    </source>
</evidence>
<evidence type="ECO:0000312" key="14">
    <source>
        <dbReference type="Proteomes" id="UP000001450"/>
    </source>
</evidence>